<organism>
    <name type="scientific">Drosophila melanogaster</name>
    <name type="common">Fruit fly</name>
    <dbReference type="NCBI Taxonomy" id="7227"/>
    <lineage>
        <taxon>Eukaryota</taxon>
        <taxon>Metazoa</taxon>
        <taxon>Ecdysozoa</taxon>
        <taxon>Arthropoda</taxon>
        <taxon>Hexapoda</taxon>
        <taxon>Insecta</taxon>
        <taxon>Pterygota</taxon>
        <taxon>Neoptera</taxon>
        <taxon>Endopterygota</taxon>
        <taxon>Diptera</taxon>
        <taxon>Brachycera</taxon>
        <taxon>Muscomorpha</taxon>
        <taxon>Ephydroidea</taxon>
        <taxon>Drosophilidae</taxon>
        <taxon>Drosophila</taxon>
        <taxon>Sophophora</taxon>
    </lineage>
</organism>
<protein>
    <recommendedName>
        <fullName>Frizzled-2</fullName>
        <shortName>dFz2</shortName>
    </recommendedName>
</protein>
<dbReference type="EMBL" id="U65589">
    <property type="protein sequence ID" value="AAC47273.1"/>
    <property type="molecule type" value="Genomic_DNA"/>
</dbReference>
<dbReference type="EMBL" id="AE014296">
    <property type="protein sequence ID" value="AAF49184.1"/>
    <property type="molecule type" value="Genomic_DNA"/>
</dbReference>
<dbReference type="EMBL" id="AE014296">
    <property type="protein sequence ID" value="ABW08569.1"/>
    <property type="molecule type" value="Genomic_DNA"/>
</dbReference>
<dbReference type="EMBL" id="BT023785">
    <property type="protein sequence ID" value="AAZ41794.1"/>
    <property type="molecule type" value="mRNA"/>
</dbReference>
<dbReference type="PIR" id="S71786">
    <property type="entry name" value="S71786"/>
</dbReference>
<dbReference type="RefSeq" id="NP_001097643.1">
    <property type="nucleotide sequence ID" value="NM_001104173.3"/>
</dbReference>
<dbReference type="RefSeq" id="NP_001137971.1">
    <property type="nucleotide sequence ID" value="NM_001144499.3"/>
</dbReference>
<dbReference type="RefSeq" id="NP_001262036.1">
    <property type="nucleotide sequence ID" value="NM_001275107.1"/>
</dbReference>
<dbReference type="RefSeq" id="NP_001262038.1">
    <property type="nucleotide sequence ID" value="NM_001275109.1"/>
</dbReference>
<dbReference type="RefSeq" id="NP_524155.1">
    <property type="nucleotide sequence ID" value="NM_079431.2"/>
</dbReference>
<dbReference type="RefSeq" id="NP_730389.1">
    <property type="nucleotide sequence ID" value="NM_168787.3"/>
</dbReference>
<dbReference type="SMR" id="Q9VVX3"/>
<dbReference type="BioGRID" id="65366">
    <property type="interactions" value="30"/>
</dbReference>
<dbReference type="DIP" id="DIP-17196N"/>
<dbReference type="FunCoup" id="Q9VVX3">
    <property type="interactions" value="291"/>
</dbReference>
<dbReference type="IntAct" id="Q9VVX3">
    <property type="interactions" value="60"/>
</dbReference>
<dbReference type="STRING" id="7227.FBpp0303228"/>
<dbReference type="TCDB" id="9.A.14.16.2">
    <property type="family name" value="the g-protein-coupled receptor (gpcr) family"/>
</dbReference>
<dbReference type="GlyCosmos" id="Q9VVX3">
    <property type="glycosylation" value="2 sites, No reported glycans"/>
</dbReference>
<dbReference type="GlyGen" id="Q9VVX3">
    <property type="glycosylation" value="2 sites"/>
</dbReference>
<dbReference type="PaxDb" id="7227-FBpp0304981"/>
<dbReference type="DNASU" id="40090"/>
<dbReference type="EnsemblMetazoa" id="FBtr0075028">
    <property type="protein sequence ID" value="FBpp0074795"/>
    <property type="gene ID" value="FBgn0016797"/>
</dbReference>
<dbReference type="EnsemblMetazoa" id="FBtr0075029">
    <property type="protein sequence ID" value="FBpp0074796"/>
    <property type="gene ID" value="FBgn0016797"/>
</dbReference>
<dbReference type="EnsemblMetazoa" id="FBtr0112890">
    <property type="protein sequence ID" value="FBpp0111803"/>
    <property type="gene ID" value="FBgn0016797"/>
</dbReference>
<dbReference type="EnsemblMetazoa" id="FBtr0299586">
    <property type="protein sequence ID" value="FBpp0288861"/>
    <property type="gene ID" value="FBgn0016797"/>
</dbReference>
<dbReference type="EnsemblMetazoa" id="FBtr0330194">
    <property type="protein sequence ID" value="FBpp0303227"/>
    <property type="gene ID" value="FBgn0016797"/>
</dbReference>
<dbReference type="EnsemblMetazoa" id="FBtr0332735">
    <property type="protein sequence ID" value="FBpp0304981"/>
    <property type="gene ID" value="FBgn0016797"/>
</dbReference>
<dbReference type="GeneID" id="40090"/>
<dbReference type="KEGG" id="dme:Dmel_CG9739"/>
<dbReference type="UCSC" id="CG9739-RC">
    <property type="organism name" value="d. melanogaster"/>
</dbReference>
<dbReference type="AGR" id="FB:FBgn0016797"/>
<dbReference type="CTD" id="40090"/>
<dbReference type="FlyBase" id="FBgn0016797">
    <property type="gene designation" value="fz2"/>
</dbReference>
<dbReference type="VEuPathDB" id="VectorBase:FBgn0016797"/>
<dbReference type="eggNOG" id="KOG3577">
    <property type="taxonomic scope" value="Eukaryota"/>
</dbReference>
<dbReference type="GeneTree" id="ENSGT00940000166857"/>
<dbReference type="HOGENOM" id="CLU_007873_2_0_1"/>
<dbReference type="InParanoid" id="Q9VVX3"/>
<dbReference type="OMA" id="QLNCAQP"/>
<dbReference type="OrthoDB" id="10053709at2759"/>
<dbReference type="PhylomeDB" id="Q9VVX3"/>
<dbReference type="Reactome" id="R-DME-209387">
    <property type="pathway name" value="Phosphorylation of ARR"/>
</dbReference>
<dbReference type="Reactome" id="R-DME-209440">
    <property type="pathway name" value="Recruitment of the 'destruction complex' to the receptor complex, the degradation of AXN and release of ARM"/>
</dbReference>
<dbReference type="Reactome" id="R-DME-209472">
    <property type="pathway name" value="Assembly of receptor complex"/>
</dbReference>
<dbReference type="Reactome" id="R-DME-4086398">
    <property type="pathway name" value="Ca2+ pathway"/>
</dbReference>
<dbReference type="Reactome" id="R-DME-4608870">
    <property type="pathway name" value="Asymmetric localization of PCP proteins"/>
</dbReference>
<dbReference type="Reactome" id="R-DME-5140745">
    <property type="pathway name" value="WNT5A-dependent internalization of FZD2, FZD5 and ROR2"/>
</dbReference>
<dbReference type="SignaLink" id="Q9VVX3"/>
<dbReference type="BioGRID-ORCS" id="40090">
    <property type="hits" value="0 hits in 3 CRISPR screens"/>
</dbReference>
<dbReference type="GenomeRNAi" id="40090"/>
<dbReference type="PRO" id="PR:Q9VVX3"/>
<dbReference type="Proteomes" id="UP000000803">
    <property type="component" value="Chromosome 3L"/>
</dbReference>
<dbReference type="Bgee" id="FBgn0016797">
    <property type="expression patterns" value="Expressed in T neuron T5d (Drosophila) in embryonic/larval optic lobe (Drosophila) and 296 other cell types or tissues"/>
</dbReference>
<dbReference type="ExpressionAtlas" id="Q9VVX3">
    <property type="expression patterns" value="baseline and differential"/>
</dbReference>
<dbReference type="GO" id="GO:0016020">
    <property type="term" value="C:membrane"/>
    <property type="evidence" value="ECO:0000303"/>
    <property type="project" value="UniProtKB"/>
</dbReference>
<dbReference type="GO" id="GO:0005634">
    <property type="term" value="C:nucleus"/>
    <property type="evidence" value="ECO:0000314"/>
    <property type="project" value="FlyBase"/>
</dbReference>
<dbReference type="GO" id="GO:0005886">
    <property type="term" value="C:plasma membrane"/>
    <property type="evidence" value="ECO:0000314"/>
    <property type="project" value="FlyBase"/>
</dbReference>
<dbReference type="GO" id="GO:1990909">
    <property type="term" value="C:Wnt signalosome"/>
    <property type="evidence" value="ECO:0000314"/>
    <property type="project" value="FlyBase"/>
</dbReference>
<dbReference type="GO" id="GO:1990851">
    <property type="term" value="C:Wnt-Frizzled-LRP5/6 complex"/>
    <property type="evidence" value="ECO:0000250"/>
    <property type="project" value="FlyBase"/>
</dbReference>
<dbReference type="GO" id="GO:0004930">
    <property type="term" value="F:G protein-coupled receptor activity"/>
    <property type="evidence" value="ECO:0007669"/>
    <property type="project" value="UniProtKB-KW"/>
</dbReference>
<dbReference type="GO" id="GO:0030165">
    <property type="term" value="F:PDZ domain binding"/>
    <property type="evidence" value="ECO:0000353"/>
    <property type="project" value="FlyBase"/>
</dbReference>
<dbReference type="GO" id="GO:0042813">
    <property type="term" value="F:Wnt receptor activity"/>
    <property type="evidence" value="ECO:0000314"/>
    <property type="project" value="FlyBase"/>
</dbReference>
<dbReference type="GO" id="GO:0017147">
    <property type="term" value="F:Wnt-protein binding"/>
    <property type="evidence" value="ECO:0000314"/>
    <property type="project" value="UniProtKB"/>
</dbReference>
<dbReference type="GO" id="GO:0048675">
    <property type="term" value="P:axon extension"/>
    <property type="evidence" value="ECO:0000315"/>
    <property type="project" value="FlyBase"/>
</dbReference>
<dbReference type="GO" id="GO:0060070">
    <property type="term" value="P:canonical Wnt signaling pathway"/>
    <property type="evidence" value="ECO:0000314"/>
    <property type="project" value="FlyBase"/>
</dbReference>
<dbReference type="GO" id="GO:0042685">
    <property type="term" value="P:cardioblast cell fate specification"/>
    <property type="evidence" value="ECO:0000316"/>
    <property type="project" value="FlyBase"/>
</dbReference>
<dbReference type="GO" id="GO:0016477">
    <property type="term" value="P:cell migration"/>
    <property type="evidence" value="ECO:0000315"/>
    <property type="project" value="FlyBase"/>
</dbReference>
<dbReference type="GO" id="GO:0035293">
    <property type="term" value="P:chitin-based larval cuticle pattern formation"/>
    <property type="evidence" value="ECO:0000316"/>
    <property type="project" value="FlyBase"/>
</dbReference>
<dbReference type="GO" id="GO:0008585">
    <property type="term" value="P:female gonad development"/>
    <property type="evidence" value="ECO:0000315"/>
    <property type="project" value="FlyBase"/>
</dbReference>
<dbReference type="GO" id="GO:0140709">
    <property type="term" value="P:Frizzled Nuclear Import pathway"/>
    <property type="evidence" value="ECO:0000315"/>
    <property type="project" value="FlyBase"/>
</dbReference>
<dbReference type="GO" id="GO:0060250">
    <property type="term" value="P:germ-line stem-cell niche homeostasis"/>
    <property type="evidence" value="ECO:0000315"/>
    <property type="project" value="FlyBase"/>
</dbReference>
<dbReference type="GO" id="GO:0008587">
    <property type="term" value="P:imaginal disc-derived wing margin morphogenesis"/>
    <property type="evidence" value="ECO:0000315"/>
    <property type="project" value="FlyBase"/>
</dbReference>
<dbReference type="GO" id="GO:0007494">
    <property type="term" value="P:midgut development"/>
    <property type="evidence" value="ECO:0000316"/>
    <property type="project" value="FlyBase"/>
</dbReference>
<dbReference type="GO" id="GO:0008045">
    <property type="term" value="P:motor neuron axon guidance"/>
    <property type="evidence" value="ECO:0000315"/>
    <property type="project" value="FlyBase"/>
</dbReference>
<dbReference type="GO" id="GO:0048665">
    <property type="term" value="P:neuron fate specification"/>
    <property type="evidence" value="ECO:0000316"/>
    <property type="project" value="FlyBase"/>
</dbReference>
<dbReference type="GO" id="GO:0035567">
    <property type="term" value="P:non-canonical Wnt signaling pathway"/>
    <property type="evidence" value="ECO:0000318"/>
    <property type="project" value="GO_Central"/>
</dbReference>
<dbReference type="GO" id="GO:0050770">
    <property type="term" value="P:regulation of axonogenesis"/>
    <property type="evidence" value="ECO:0000315"/>
    <property type="project" value="FlyBase"/>
</dbReference>
<dbReference type="GO" id="GO:0035206">
    <property type="term" value="P:regulation of hemocyte proliferation"/>
    <property type="evidence" value="ECO:0000315"/>
    <property type="project" value="FlyBase"/>
</dbReference>
<dbReference type="GO" id="GO:0031290">
    <property type="term" value="P:retinal ganglion cell axon guidance"/>
    <property type="evidence" value="ECO:0000315"/>
    <property type="project" value="FlyBase"/>
</dbReference>
<dbReference type="GO" id="GO:0007435">
    <property type="term" value="P:salivary gland morphogenesis"/>
    <property type="evidence" value="ECO:0000315"/>
    <property type="project" value="FlyBase"/>
</dbReference>
<dbReference type="GO" id="GO:0007367">
    <property type="term" value="P:segment polarity determination"/>
    <property type="evidence" value="ECO:0000316"/>
    <property type="project" value="FlyBase"/>
</dbReference>
<dbReference type="GO" id="GO:0050808">
    <property type="term" value="P:synapse organization"/>
    <property type="evidence" value="ECO:0000353"/>
    <property type="project" value="FlyBase"/>
</dbReference>
<dbReference type="GO" id="GO:0016201">
    <property type="term" value="P:synaptic target inhibition"/>
    <property type="evidence" value="ECO:0000315"/>
    <property type="project" value="FlyBase"/>
</dbReference>
<dbReference type="GO" id="GO:0016055">
    <property type="term" value="P:Wnt signaling pathway"/>
    <property type="evidence" value="ECO:0000314"/>
    <property type="project" value="UniProtKB"/>
</dbReference>
<dbReference type="CDD" id="cd15035">
    <property type="entry name" value="7tmF_FZD5_FZD8-like"/>
    <property type="match status" value="1"/>
</dbReference>
<dbReference type="CDD" id="cd07456">
    <property type="entry name" value="CRD_FZ5_like"/>
    <property type="match status" value="1"/>
</dbReference>
<dbReference type="FunFam" id="1.20.1070.10:FF:000262">
    <property type="entry name" value="Frizzled 2"/>
    <property type="match status" value="1"/>
</dbReference>
<dbReference type="FunFam" id="1.10.2000.10:FF:000004">
    <property type="entry name" value="Frizzled class receptor 8a"/>
    <property type="match status" value="1"/>
</dbReference>
<dbReference type="Gene3D" id="1.10.2000.10">
    <property type="entry name" value="Frizzled cysteine-rich domain"/>
    <property type="match status" value="1"/>
</dbReference>
<dbReference type="Gene3D" id="1.20.1070.10">
    <property type="entry name" value="Rhodopsin 7-helix transmembrane proteins"/>
    <property type="match status" value="1"/>
</dbReference>
<dbReference type="InterPro" id="IPR015526">
    <property type="entry name" value="Frizzled/SFRP"/>
</dbReference>
<dbReference type="InterPro" id="IPR000539">
    <property type="entry name" value="Frizzled/Smoothened_7TM"/>
</dbReference>
<dbReference type="InterPro" id="IPR020067">
    <property type="entry name" value="Frizzled_dom"/>
</dbReference>
<dbReference type="InterPro" id="IPR036790">
    <property type="entry name" value="Frizzled_dom_sf"/>
</dbReference>
<dbReference type="InterPro" id="IPR017981">
    <property type="entry name" value="GPCR_2-like_7TM"/>
</dbReference>
<dbReference type="PANTHER" id="PTHR11309">
    <property type="entry name" value="FRIZZLED"/>
    <property type="match status" value="1"/>
</dbReference>
<dbReference type="PANTHER" id="PTHR11309:SF126">
    <property type="entry name" value="FRIZZLED-2"/>
    <property type="match status" value="1"/>
</dbReference>
<dbReference type="Pfam" id="PF01534">
    <property type="entry name" value="Frizzled"/>
    <property type="match status" value="1"/>
</dbReference>
<dbReference type="Pfam" id="PF01392">
    <property type="entry name" value="Fz"/>
    <property type="match status" value="1"/>
</dbReference>
<dbReference type="PRINTS" id="PR00489">
    <property type="entry name" value="FRIZZLED"/>
</dbReference>
<dbReference type="SMART" id="SM00063">
    <property type="entry name" value="FRI"/>
    <property type="match status" value="1"/>
</dbReference>
<dbReference type="SMART" id="SM01330">
    <property type="entry name" value="Frizzled"/>
    <property type="match status" value="1"/>
</dbReference>
<dbReference type="SUPFAM" id="SSF63501">
    <property type="entry name" value="Frizzled cysteine-rich domain"/>
    <property type="match status" value="1"/>
</dbReference>
<dbReference type="PROSITE" id="PS50038">
    <property type="entry name" value="FZ"/>
    <property type="match status" value="1"/>
</dbReference>
<dbReference type="PROSITE" id="PS50261">
    <property type="entry name" value="G_PROTEIN_RECEP_F2_4"/>
    <property type="match status" value="1"/>
</dbReference>
<evidence type="ECO:0000250" key="1"/>
<evidence type="ECO:0000255" key="2"/>
<evidence type="ECO:0000255" key="3">
    <source>
        <dbReference type="PROSITE-ProRule" id="PRU00090"/>
    </source>
</evidence>
<evidence type="ECO:0000256" key="4">
    <source>
        <dbReference type="SAM" id="MobiDB-lite"/>
    </source>
</evidence>
<evidence type="ECO:0000269" key="5">
    <source>
    </source>
</evidence>
<evidence type="ECO:0000269" key="6">
    <source>
    </source>
</evidence>
<evidence type="ECO:0000269" key="7">
    <source>
    </source>
</evidence>
<evidence type="ECO:0000305" key="8"/>
<feature type="signal peptide" evidence="2">
    <location>
        <begin position="1"/>
        <end position="22"/>
    </location>
</feature>
<feature type="chain" id="PRO_0000013012" description="Frizzled-2">
    <location>
        <begin position="23"/>
        <end position="694"/>
    </location>
</feature>
<feature type="topological domain" description="Extracellular" evidence="2">
    <location>
        <begin position="23"/>
        <end position="315"/>
    </location>
</feature>
<feature type="transmembrane region" description="Helical; Name=1" evidence="2">
    <location>
        <begin position="316"/>
        <end position="336"/>
    </location>
</feature>
<feature type="topological domain" description="Cytoplasmic" evidence="2">
    <location>
        <begin position="337"/>
        <end position="352"/>
    </location>
</feature>
<feature type="transmembrane region" description="Helical; Name=2" evidence="2">
    <location>
        <begin position="353"/>
        <end position="373"/>
    </location>
</feature>
<feature type="topological domain" description="Extracellular" evidence="2">
    <location>
        <begin position="374"/>
        <end position="397"/>
    </location>
</feature>
<feature type="transmembrane region" description="Helical; Name=3" evidence="2">
    <location>
        <begin position="398"/>
        <end position="418"/>
    </location>
</feature>
<feature type="topological domain" description="Cytoplasmic" evidence="2">
    <location>
        <begin position="419"/>
        <end position="439"/>
    </location>
</feature>
<feature type="transmembrane region" description="Helical; Name=4" evidence="2">
    <location>
        <begin position="440"/>
        <end position="460"/>
    </location>
</feature>
<feature type="topological domain" description="Extracellular" evidence="2">
    <location>
        <begin position="461"/>
        <end position="482"/>
    </location>
</feature>
<feature type="transmembrane region" description="Helical; Name=5" evidence="2">
    <location>
        <begin position="483"/>
        <end position="503"/>
    </location>
</feature>
<feature type="topological domain" description="Cytoplasmic" evidence="2">
    <location>
        <begin position="504"/>
        <end position="534"/>
    </location>
</feature>
<feature type="transmembrane region" description="Helical; Name=6" evidence="2">
    <location>
        <begin position="535"/>
        <end position="555"/>
    </location>
</feature>
<feature type="topological domain" description="Extracellular" evidence="2">
    <location>
        <begin position="556"/>
        <end position="584"/>
    </location>
</feature>
<feature type="transmembrane region" description="Helical; Name=7" evidence="2">
    <location>
        <begin position="585"/>
        <end position="605"/>
    </location>
</feature>
<feature type="topological domain" description="Cytoplasmic" evidence="2">
    <location>
        <begin position="606"/>
        <end position="694"/>
    </location>
</feature>
<feature type="domain" description="FZ" evidence="3">
    <location>
        <begin position="59"/>
        <end position="180"/>
    </location>
</feature>
<feature type="region of interest" description="Disordered" evidence="4">
    <location>
        <begin position="175"/>
        <end position="253"/>
    </location>
</feature>
<feature type="short sequence motif" description="Lys-Thr-X-X-X-Trp motif, mediates interaction with the PDZ domain of Dvl family members" evidence="1">
    <location>
        <begin position="608"/>
        <end position="613"/>
    </location>
</feature>
<feature type="short sequence motif" description="PDZ-binding">
    <location>
        <begin position="692"/>
        <end position="694"/>
    </location>
</feature>
<feature type="compositionally biased region" description="Gly residues" evidence="4">
    <location>
        <begin position="187"/>
        <end position="224"/>
    </location>
</feature>
<feature type="glycosylation site" description="N-linked (GlcNAc...) asparagine" evidence="2">
    <location>
        <position position="78"/>
    </location>
</feature>
<feature type="glycosylation site" description="N-linked (GlcNAc...) asparagine" evidence="2">
    <location>
        <position position="288"/>
    </location>
</feature>
<feature type="disulfide bond" evidence="3">
    <location>
        <begin position="64"/>
        <end position="125"/>
    </location>
</feature>
<feature type="disulfide bond" evidence="3">
    <location>
        <begin position="72"/>
        <end position="118"/>
    </location>
</feature>
<feature type="disulfide bond" evidence="3">
    <location>
        <begin position="109"/>
        <end position="147"/>
    </location>
</feature>
<feature type="disulfide bond" evidence="3">
    <location>
        <begin position="136"/>
        <end position="177"/>
    </location>
</feature>
<feature type="disulfide bond" evidence="3">
    <location>
        <begin position="140"/>
        <end position="164"/>
    </location>
</feature>
<feature type="sequence conflict" description="In Ref. 1; AAC47273." evidence="8" ref="1">
    <original>V</original>
    <variation>A</variation>
    <location>
        <position position="55"/>
    </location>
</feature>
<feature type="sequence conflict" description="In Ref. 1; AAC47273." evidence="8" ref="1">
    <original>S</original>
    <variation>T</variation>
    <location>
        <position position="417"/>
    </location>
</feature>
<proteinExistence type="evidence at protein level"/>
<gene>
    <name type="primary">fz2</name>
    <name type="ORF">CG9739</name>
</gene>
<name>FRIZ2_DROME</name>
<comment type="function">
    <text evidence="5">Receptor for Wnt proteins. Most of frizzled receptors are coupled to the beta-catenin canonical signaling pathway, which leads to the activation of disheveled proteins, inhibition of GSK-3 kinase, nuclear accumulation of beta-catenin and activation of Wnt target genes. A second signaling pathway involving PKC and calcium fluxes has been seen for some family members, but it is not yet clear if it represents a distinct pathway or if it can be integrated in the canonical pathway, as PKC seems to be required for Wnt-mediated inactivation of GSK-3 kinase. Both pathways seem to involve interactions with G-proteins. Required to coordinate the cytoskeletons of epidermal cells to produce a parallel array of cuticular hairs and bristles.</text>
</comment>
<comment type="subunit">
    <text evidence="6">Interacts with ATP6AP2.</text>
</comment>
<comment type="interaction">
    <interactant intactId="EBI-118222">
        <id>Q9VVX3</id>
    </interactant>
    <interactant intactId="EBI-149374">
        <id>Q9W450</id>
        <label>Grip</label>
    </interactant>
    <organismsDiffer>false</organismsDiffer>
    <experiments>3</experiments>
</comment>
<comment type="subcellular location">
    <subcellularLocation>
        <location evidence="5">Cell membrane</location>
        <topology evidence="5">Multi-pass membrane protein</topology>
    </subcellularLocation>
</comment>
<comment type="developmental stage">
    <text>Expression starts at stage 6 in all cells between 15 and 70 per cent of egg length, including the invaginating cells of the ventral furrow. Stripe pattern is emerging by early stage 8. From stage 9 and continuing throughout embryogenesis, expression is seen in the developing CNS. At stage 10, expressed in 15 stripes in the presumptive head and trunk regions, in the posterior midgut primordium, in a subset of cells of anterior midgut invagination and in the procephalic lobe. At stage 12, expression declines in epidermis and increases in the midgut and visceral mesoderm. At stage 17, only expressed in the CNS, hindgut and dorsal vessel.</text>
</comment>
<comment type="domain">
    <text evidence="1">Lys-Thr-X-X-X-Trp motif interacts with the PDZ domain of Dvl (Disheveled) family members and is involved in the activation of the Wnt/beta-catenin signaling pathway.</text>
</comment>
<comment type="domain">
    <text evidence="7">The FZ domain is involved in binding with Wnt ligands.</text>
</comment>
<comment type="similarity">
    <text evidence="8">Belongs to the G-protein coupled receptor Fz/Smo family.</text>
</comment>
<reference key="1">
    <citation type="journal article" date="1996" name="Nature">
        <title>A new member of the frizzled family from Drosophila functions as a Wingless receptor.</title>
        <authorList>
            <person name="Bhanot P."/>
            <person name="Brink M."/>
            <person name="Samos C.H."/>
            <person name="Hsieh J.C."/>
            <person name="Wang Y."/>
            <person name="Macke J.P."/>
            <person name="Andrew D."/>
            <person name="Nathans J."/>
            <person name="Nusse R."/>
        </authorList>
    </citation>
    <scope>NUCLEOTIDE SEQUENCE [GENOMIC DNA]</scope>
    <scope>INTERACTION WITH WG THROUGH FZ DOMAIN</scope>
</reference>
<reference key="2">
    <citation type="journal article" date="2000" name="Science">
        <title>The genome sequence of Drosophila melanogaster.</title>
        <authorList>
            <person name="Adams M.D."/>
            <person name="Celniker S.E."/>
            <person name="Holt R.A."/>
            <person name="Evans C.A."/>
            <person name="Gocayne J.D."/>
            <person name="Amanatides P.G."/>
            <person name="Scherer S.E."/>
            <person name="Li P.W."/>
            <person name="Hoskins R.A."/>
            <person name="Galle R.F."/>
            <person name="George R.A."/>
            <person name="Lewis S.E."/>
            <person name="Richards S."/>
            <person name="Ashburner M."/>
            <person name="Henderson S.N."/>
            <person name="Sutton G.G."/>
            <person name="Wortman J.R."/>
            <person name="Yandell M.D."/>
            <person name="Zhang Q."/>
            <person name="Chen L.X."/>
            <person name="Brandon R.C."/>
            <person name="Rogers Y.-H.C."/>
            <person name="Blazej R.G."/>
            <person name="Champe M."/>
            <person name="Pfeiffer B.D."/>
            <person name="Wan K.H."/>
            <person name="Doyle C."/>
            <person name="Baxter E.G."/>
            <person name="Helt G."/>
            <person name="Nelson C.R."/>
            <person name="Miklos G.L.G."/>
            <person name="Abril J.F."/>
            <person name="Agbayani A."/>
            <person name="An H.-J."/>
            <person name="Andrews-Pfannkoch C."/>
            <person name="Baldwin D."/>
            <person name="Ballew R.M."/>
            <person name="Basu A."/>
            <person name="Baxendale J."/>
            <person name="Bayraktaroglu L."/>
            <person name="Beasley E.M."/>
            <person name="Beeson K.Y."/>
            <person name="Benos P.V."/>
            <person name="Berman B.P."/>
            <person name="Bhandari D."/>
            <person name="Bolshakov S."/>
            <person name="Borkova D."/>
            <person name="Botchan M.R."/>
            <person name="Bouck J."/>
            <person name="Brokstein P."/>
            <person name="Brottier P."/>
            <person name="Burtis K.C."/>
            <person name="Busam D.A."/>
            <person name="Butler H."/>
            <person name="Cadieu E."/>
            <person name="Center A."/>
            <person name="Chandra I."/>
            <person name="Cherry J.M."/>
            <person name="Cawley S."/>
            <person name="Dahlke C."/>
            <person name="Davenport L.B."/>
            <person name="Davies P."/>
            <person name="de Pablos B."/>
            <person name="Delcher A."/>
            <person name="Deng Z."/>
            <person name="Mays A.D."/>
            <person name="Dew I."/>
            <person name="Dietz S.M."/>
            <person name="Dodson K."/>
            <person name="Doup L.E."/>
            <person name="Downes M."/>
            <person name="Dugan-Rocha S."/>
            <person name="Dunkov B.C."/>
            <person name="Dunn P."/>
            <person name="Durbin K.J."/>
            <person name="Evangelista C.C."/>
            <person name="Ferraz C."/>
            <person name="Ferriera S."/>
            <person name="Fleischmann W."/>
            <person name="Fosler C."/>
            <person name="Gabrielian A.E."/>
            <person name="Garg N.S."/>
            <person name="Gelbart W.M."/>
            <person name="Glasser K."/>
            <person name="Glodek A."/>
            <person name="Gong F."/>
            <person name="Gorrell J.H."/>
            <person name="Gu Z."/>
            <person name="Guan P."/>
            <person name="Harris M."/>
            <person name="Harris N.L."/>
            <person name="Harvey D.A."/>
            <person name="Heiman T.J."/>
            <person name="Hernandez J.R."/>
            <person name="Houck J."/>
            <person name="Hostin D."/>
            <person name="Houston K.A."/>
            <person name="Howland T.J."/>
            <person name="Wei M.-H."/>
            <person name="Ibegwam C."/>
            <person name="Jalali M."/>
            <person name="Kalush F."/>
            <person name="Karpen G.H."/>
            <person name="Ke Z."/>
            <person name="Kennison J.A."/>
            <person name="Ketchum K.A."/>
            <person name="Kimmel B.E."/>
            <person name="Kodira C.D."/>
            <person name="Kraft C.L."/>
            <person name="Kravitz S."/>
            <person name="Kulp D."/>
            <person name="Lai Z."/>
            <person name="Lasko P."/>
            <person name="Lei Y."/>
            <person name="Levitsky A.A."/>
            <person name="Li J.H."/>
            <person name="Li Z."/>
            <person name="Liang Y."/>
            <person name="Lin X."/>
            <person name="Liu X."/>
            <person name="Mattei B."/>
            <person name="McIntosh T.C."/>
            <person name="McLeod M.P."/>
            <person name="McPherson D."/>
            <person name="Merkulov G."/>
            <person name="Milshina N.V."/>
            <person name="Mobarry C."/>
            <person name="Morris J."/>
            <person name="Moshrefi A."/>
            <person name="Mount S.M."/>
            <person name="Moy M."/>
            <person name="Murphy B."/>
            <person name="Murphy L."/>
            <person name="Muzny D.M."/>
            <person name="Nelson D.L."/>
            <person name="Nelson D.R."/>
            <person name="Nelson K.A."/>
            <person name="Nixon K."/>
            <person name="Nusskern D.R."/>
            <person name="Pacleb J.M."/>
            <person name="Palazzolo M."/>
            <person name="Pittman G.S."/>
            <person name="Pan S."/>
            <person name="Pollard J."/>
            <person name="Puri V."/>
            <person name="Reese M.G."/>
            <person name="Reinert K."/>
            <person name="Remington K."/>
            <person name="Saunders R.D.C."/>
            <person name="Scheeler F."/>
            <person name="Shen H."/>
            <person name="Shue B.C."/>
            <person name="Siden-Kiamos I."/>
            <person name="Simpson M."/>
            <person name="Skupski M.P."/>
            <person name="Smith T.J."/>
            <person name="Spier E."/>
            <person name="Spradling A.C."/>
            <person name="Stapleton M."/>
            <person name="Strong R."/>
            <person name="Sun E."/>
            <person name="Svirskas R."/>
            <person name="Tector C."/>
            <person name="Turner R."/>
            <person name="Venter E."/>
            <person name="Wang A.H."/>
            <person name="Wang X."/>
            <person name="Wang Z.-Y."/>
            <person name="Wassarman D.A."/>
            <person name="Weinstock G.M."/>
            <person name="Weissenbach J."/>
            <person name="Williams S.M."/>
            <person name="Woodage T."/>
            <person name="Worley K.C."/>
            <person name="Wu D."/>
            <person name="Yang S."/>
            <person name="Yao Q.A."/>
            <person name="Ye J."/>
            <person name="Yeh R.-F."/>
            <person name="Zaveri J.S."/>
            <person name="Zhan M."/>
            <person name="Zhang G."/>
            <person name="Zhao Q."/>
            <person name="Zheng L."/>
            <person name="Zheng X.H."/>
            <person name="Zhong F.N."/>
            <person name="Zhong W."/>
            <person name="Zhou X."/>
            <person name="Zhu S.C."/>
            <person name="Zhu X."/>
            <person name="Smith H.O."/>
            <person name="Gibbs R.A."/>
            <person name="Myers E.W."/>
            <person name="Rubin G.M."/>
            <person name="Venter J.C."/>
        </authorList>
    </citation>
    <scope>NUCLEOTIDE SEQUENCE [LARGE SCALE GENOMIC DNA]</scope>
    <source>
        <strain>Berkeley</strain>
    </source>
</reference>
<reference key="3">
    <citation type="journal article" date="1999" name="Proc. Natl. Acad. Sci. U.S.A.">
        <title>Biochemical characterization of Wnt-frizzled interactions using a soluble, biologically active vertebrate Wnt protein.</title>
        <authorList>
            <person name="Hsieh J.C."/>
            <person name="Rattner A."/>
            <person name="Smallwood P.M."/>
            <person name="Nathans J."/>
        </authorList>
    </citation>
    <scope>FUNCTION</scope>
    <scope>SUBCELLULAR LOCATION</scope>
</reference>
<reference key="4">
    <citation type="journal article" date="2002" name="Genome Biol.">
        <title>Annotation of the Drosophila melanogaster euchromatic genome: a systematic review.</title>
        <authorList>
            <person name="Misra S."/>
            <person name="Crosby M.A."/>
            <person name="Mungall C.J."/>
            <person name="Matthews B.B."/>
            <person name="Campbell K.S."/>
            <person name="Hradecky P."/>
            <person name="Huang Y."/>
            <person name="Kaminker J.S."/>
            <person name="Millburn G.H."/>
            <person name="Prochnik S.E."/>
            <person name="Smith C.D."/>
            <person name="Tupy J.L."/>
            <person name="Whitfield E.J."/>
            <person name="Bayraktaroglu L."/>
            <person name="Berman B.P."/>
            <person name="Bettencourt B.R."/>
            <person name="Celniker S.E."/>
            <person name="de Grey A.D.N.J."/>
            <person name="Drysdale R.A."/>
            <person name="Harris N.L."/>
            <person name="Richter J."/>
            <person name="Russo S."/>
            <person name="Schroeder A.J."/>
            <person name="Shu S.Q."/>
            <person name="Stapleton M."/>
            <person name="Yamada C."/>
            <person name="Ashburner M."/>
            <person name="Gelbart W.M."/>
            <person name="Rubin G.M."/>
            <person name="Lewis S.E."/>
        </authorList>
    </citation>
    <scope>GENOME REANNOTATION</scope>
    <source>
        <strain>Berkeley</strain>
    </source>
</reference>
<reference key="5">
    <citation type="submission" date="2006-06" db="EMBL/GenBank/DDBJ databases">
        <authorList>
            <person name="Stapleton M."/>
            <person name="Carlson J.W."/>
            <person name="Chavez C."/>
            <person name="Frise E."/>
            <person name="George R.A."/>
            <person name="Pacleb J.M."/>
            <person name="Park S."/>
            <person name="Wan K.H."/>
            <person name="Yu C."/>
            <person name="Celniker S.E."/>
        </authorList>
    </citation>
    <scope>NUCLEOTIDE SEQUENCE [LARGE SCALE MRNA]</scope>
    <source>
        <strain>Berkeley</strain>
        <tissue>Embryo</tissue>
    </source>
</reference>
<reference key="6">
    <citation type="journal article" date="2010" name="Curr. Biol.">
        <title>Wnt/Frizzled signaling requires dPRR, the Drosophila homolog of the prorenin receptor.</title>
        <authorList>
            <person name="Buechling T."/>
            <person name="Bartscherer K."/>
            <person name="Ohkawara B."/>
            <person name="Chaudhary V."/>
            <person name="Spirohn K."/>
            <person name="Niehrs C."/>
            <person name="Boutros M."/>
        </authorList>
    </citation>
    <scope>INTERACTION WITH ATP6AP2</scope>
</reference>
<sequence length="694" mass="75451">MRHNRLKVLILGLVLLLTSCRADGPLHSADHGMGGMGMGGHGLDASPAPGYGVPVIPKDPNLRCEEITIPMCRGIGYNMTSFPNEMNHETQDEAGLEVHQFWPLVEIKCSPDLKFFLCSMYTPICLEDYHKPLPVCRSVCERARSGCAPIMQQYSFEWPERMACEHLPLHGDPDNLCMEQPSYTEAGSGGSSGGSGGSGSGSGSGGKRKQGGSGSGGSGAGGSSGSTSTKPCRGRNSKNCQNPQGEKASGKECSCSCRSPLIFLGKEQLLQQQSQMPMMHHPHHWYMNLTVQRIAGVPNCGIPCKGPFFSNDEKDFAGLWIALWSGLCFCSTLMTLTTFIIDTERFKYPERPIVFLSACYFMVAVGYLSRNFLQNEEIACDGLLLRESSTGPHSCTLVFLLTYFFGMASSIWWVILSFTWFLAAGLKWGNEAITKHSQYFHLAAWLIPTVQSVAVLLLSAVDGDPILGICYVGNLNPDHLKTFVLAPLFVYLVIGTTFLMAGFVSLFRIRSVIKQQGGVGAGVKADKLEKLMIRIGIFSVLYTVPATIVIGCYLYEAAYFEDWIKALACPCAQVKGPGKKPLYSVLMLKYFMALAVGITSGVWIWSGKTLESWRRFWRRLLGAPDRTGANQALIKQRPPIPHPYAGSGMGMPVGSAAGSLLATPYTQAGGASVASTSHHHLHHHVLKQPAASHV</sequence>
<accession>Q9VVX3</accession>
<accession>A8JNV7</accession>
<accession>Q494J1</accession>
<accession>Q94916</accession>
<accession>Q9VVX2</accession>
<keyword id="KW-1003">Cell membrane</keyword>
<keyword id="KW-0217">Developmental protein</keyword>
<keyword id="KW-1015">Disulfide bond</keyword>
<keyword id="KW-0297">G-protein coupled receptor</keyword>
<keyword id="KW-0325">Glycoprotein</keyword>
<keyword id="KW-0472">Membrane</keyword>
<keyword id="KW-0675">Receptor</keyword>
<keyword id="KW-1185">Reference proteome</keyword>
<keyword id="KW-0732">Signal</keyword>
<keyword id="KW-0807">Transducer</keyword>
<keyword id="KW-0812">Transmembrane</keyword>
<keyword id="KW-1133">Transmembrane helix</keyword>
<keyword id="KW-0879">Wnt signaling pathway</keyword>